<protein>
    <recommendedName>
        <fullName evidence="1">Photosystem II reaction center protein Psb30</fullName>
    </recommendedName>
    <alternativeName>
        <fullName evidence="1">Photosystem II reaction center protein Ycf12</fullName>
    </alternativeName>
</protein>
<reference key="1">
    <citation type="journal article" date="2005" name="DNA Res.">
        <title>The complete plastid genome sequence of the haptophyte Emiliania huxleyi: a comparison to other plastid genomes.</title>
        <authorList>
            <person name="Sanchez-Puerta M.V."/>
            <person name="Bachvaroff T.R."/>
            <person name="Delwiche C.F."/>
        </authorList>
    </citation>
    <scope>NUCLEOTIDE SEQUENCE [LARGE SCALE GENOMIC DNA]</scope>
    <source>
        <strain>CCMP373 / CSIRO-CS-57 / BT6</strain>
    </source>
</reference>
<sequence>MFNWNIVAQLLSLALVTLSGPAVIFLLYFKRGNL</sequence>
<proteinExistence type="inferred from homology"/>
<feature type="chain" id="PRO_0000242471" description="Photosystem II reaction center protein Psb30">
    <location>
        <begin position="1"/>
        <end position="34"/>
    </location>
</feature>
<feature type="transmembrane region" description="Helical" evidence="1">
    <location>
        <begin position="6"/>
        <end position="26"/>
    </location>
</feature>
<name>PSB30_EMIHU</name>
<evidence type="ECO:0000255" key="1">
    <source>
        <dbReference type="HAMAP-Rule" id="MF_01329"/>
    </source>
</evidence>
<accession>Q4G3D2</accession>
<geneLocation type="chloroplast"/>
<keyword id="KW-0150">Chloroplast</keyword>
<keyword id="KW-0472">Membrane</keyword>
<keyword id="KW-0602">Photosynthesis</keyword>
<keyword id="KW-0604">Photosystem II</keyword>
<keyword id="KW-0934">Plastid</keyword>
<keyword id="KW-0793">Thylakoid</keyword>
<keyword id="KW-0812">Transmembrane</keyword>
<keyword id="KW-1133">Transmembrane helix</keyword>
<gene>
    <name evidence="1" type="primary">psb30</name>
    <name evidence="1" type="synonym">ycf12</name>
</gene>
<comment type="function">
    <text evidence="1">A core subunit of photosystem II (PSII), probably helps stabilize the reaction center.</text>
</comment>
<comment type="subunit">
    <text evidence="1">PSII is composed of 1 copy each of membrane proteins PsbA, PsbB, PsbC, PsbD, PsbE, PsbF, PsbH, PsbI, PsbJ, PsbK, PsbL, PsbM, PsbT, PsbX, PsbY, PsbZ, Psb30/Ycf12, peripheral proteins of the oxygen-evolving complex and a large number of cofactors. It forms dimeric complexes.</text>
</comment>
<comment type="subcellular location">
    <subcellularLocation>
        <location evidence="1">Plastid</location>
        <location evidence="1">Chloroplast thylakoid membrane</location>
        <topology evidence="1">Single-pass membrane protein</topology>
    </subcellularLocation>
</comment>
<comment type="similarity">
    <text evidence="1">Belongs to the Psb30/Ycf12 family.</text>
</comment>
<organism>
    <name type="scientific">Emiliania huxleyi</name>
    <name type="common">Coccolithophore</name>
    <name type="synonym">Pontosphaera huxleyi</name>
    <dbReference type="NCBI Taxonomy" id="2903"/>
    <lineage>
        <taxon>Eukaryota</taxon>
        <taxon>Haptista</taxon>
        <taxon>Haptophyta</taxon>
        <taxon>Prymnesiophyceae</taxon>
        <taxon>Isochrysidales</taxon>
        <taxon>Noelaerhabdaceae</taxon>
        <taxon>Emiliania</taxon>
    </lineage>
</organism>
<dbReference type="EMBL" id="AY741371">
    <property type="protein sequence ID" value="AAX13834.1"/>
    <property type="molecule type" value="Genomic_DNA"/>
</dbReference>
<dbReference type="RefSeq" id="YP_277335.1">
    <property type="nucleotide sequence ID" value="NC_007288.1"/>
</dbReference>
<dbReference type="SMR" id="Q4G3D2"/>
<dbReference type="STRING" id="2903.Q4G3D2"/>
<dbReference type="GeneID" id="3562566"/>
<dbReference type="GO" id="GO:0009535">
    <property type="term" value="C:chloroplast thylakoid membrane"/>
    <property type="evidence" value="ECO:0007669"/>
    <property type="project" value="UniProtKB-SubCell"/>
</dbReference>
<dbReference type="GO" id="GO:0009523">
    <property type="term" value="C:photosystem II"/>
    <property type="evidence" value="ECO:0007669"/>
    <property type="project" value="UniProtKB-KW"/>
</dbReference>
<dbReference type="GO" id="GO:0015979">
    <property type="term" value="P:photosynthesis"/>
    <property type="evidence" value="ECO:0007669"/>
    <property type="project" value="UniProtKB-KW"/>
</dbReference>
<dbReference type="HAMAP" id="MF_01329">
    <property type="entry name" value="PSII_Psb30_Ycf12"/>
    <property type="match status" value="1"/>
</dbReference>
<dbReference type="InterPro" id="IPR010284">
    <property type="entry name" value="PSII_Ycf12_core-subunit"/>
</dbReference>
<dbReference type="NCBIfam" id="NF010239">
    <property type="entry name" value="PRK13686.1"/>
    <property type="match status" value="1"/>
</dbReference>
<dbReference type="Pfam" id="PF05969">
    <property type="entry name" value="PSII_Ycf12"/>
    <property type="match status" value="1"/>
</dbReference>